<evidence type="ECO:0000255" key="1">
    <source>
        <dbReference type="HAMAP-Rule" id="MF_00054"/>
    </source>
</evidence>
<comment type="function">
    <text evidence="1">Catalyzes the GTP-dependent ribosomal translocation step during translation elongation. During this step, the ribosome changes from the pre-translocational (PRE) to the post-translocational (POST) state as the newly formed A-site-bound peptidyl-tRNA and P-site-bound deacylated tRNA move to the P and E sites, respectively. Catalyzes the coordinated movement of the two tRNA molecules, the mRNA and conformational changes in the ribosome.</text>
</comment>
<comment type="subcellular location">
    <subcellularLocation>
        <location evidence="1">Cytoplasm</location>
    </subcellularLocation>
</comment>
<comment type="similarity">
    <text evidence="1">Belongs to the TRAFAC class translation factor GTPase superfamily. Classic translation factor GTPase family. EF-G/EF-2 subfamily.</text>
</comment>
<protein>
    <recommendedName>
        <fullName evidence="1">Elongation factor G</fullName>
        <shortName evidence="1">EF-G</shortName>
    </recommendedName>
</protein>
<feature type="chain" id="PRO_1000091692" description="Elongation factor G">
    <location>
        <begin position="1"/>
        <end position="691"/>
    </location>
</feature>
<feature type="domain" description="tr-type G">
    <location>
        <begin position="8"/>
        <end position="283"/>
    </location>
</feature>
<feature type="binding site" evidence="1">
    <location>
        <begin position="17"/>
        <end position="24"/>
    </location>
    <ligand>
        <name>GTP</name>
        <dbReference type="ChEBI" id="CHEBI:37565"/>
    </ligand>
</feature>
<feature type="binding site" evidence="1">
    <location>
        <begin position="81"/>
        <end position="85"/>
    </location>
    <ligand>
        <name>GTP</name>
        <dbReference type="ChEBI" id="CHEBI:37565"/>
    </ligand>
</feature>
<feature type="binding site" evidence="1">
    <location>
        <begin position="135"/>
        <end position="138"/>
    </location>
    <ligand>
        <name>GTP</name>
        <dbReference type="ChEBI" id="CHEBI:37565"/>
    </ligand>
</feature>
<name>EFG_BEII9</name>
<proteinExistence type="inferred from homology"/>
<reference key="1">
    <citation type="journal article" date="2010" name="J. Bacteriol.">
        <title>Complete genome sequence of Beijerinckia indica subsp. indica.</title>
        <authorList>
            <person name="Tamas I."/>
            <person name="Dedysh S.N."/>
            <person name="Liesack W."/>
            <person name="Stott M.B."/>
            <person name="Alam M."/>
            <person name="Murrell J.C."/>
            <person name="Dunfield P.F."/>
        </authorList>
    </citation>
    <scope>NUCLEOTIDE SEQUENCE [LARGE SCALE GENOMIC DNA]</scope>
    <source>
        <strain>ATCC 9039 / DSM 1715 / NCIMB 8712</strain>
    </source>
</reference>
<gene>
    <name evidence="1" type="primary">fusA</name>
    <name type="ordered locus">Bind_1351</name>
</gene>
<accession>B2IK59</accession>
<sequence>MPRSHPIEDYRNFGIMAHIDAGKTTTTERILYYSGKSHKIGEVHDGAATMDWMEQEQERGITITSAATTTFWNGRRLNIIDTPGHVDFTIEVERSLRVLDGAVCVLDGNQGVEPQTETVWRQADKYNVPRIVFVNKMDKIGADFYRCVEDIKTKVGGRPVCIQLPIGSEADFKGIIDLVRMKAVVWEDEALGAKYHDEEIPDDLKEKAIHYRNLLVEAAVELDDDAMTAYLEGVEPDEALLKLLIRKAVRQITFIPVLCGSAFKNKGVQPLLDAVVDYLPTPIDREAIKGVDVNTGEETVRLPSDSEPFSMLAFKIMDDPFVGSITFARVYSGKIESGTSVVNSTKDKKERIGRMLLMHANNREDIKEAYAGDIVALAGLKETRTGDTLCDVNKPVILERMEFPEPVIEIAIEPKSKADQEKLGIALSKLAAEDPSFRVSTDQESGQTILKGMGELHLDIKVDILKRTYKVDANIGAPQVAYREKLMRRVEIDETHKKQTGGTGQFARVKMIFEPNEAAAGNAFESNIVGGAVPKEYIPGVEKGLYSVLNSGVLAGFPVVDVKATLIDGAFHEVDSSVLAFEICSRAATRRALKEGGSVLLEPIMKVEVTTPEEYTGSVMGDLLGRRGQVQGQDMRGNAVVINAMVPLANMFGYVNQLRSFSQGRANYSMQFDHYEQVPANEAAKVQAKYA</sequence>
<organism>
    <name type="scientific">Beijerinckia indica subsp. indica (strain ATCC 9039 / DSM 1715 / NCIMB 8712)</name>
    <dbReference type="NCBI Taxonomy" id="395963"/>
    <lineage>
        <taxon>Bacteria</taxon>
        <taxon>Pseudomonadati</taxon>
        <taxon>Pseudomonadota</taxon>
        <taxon>Alphaproteobacteria</taxon>
        <taxon>Hyphomicrobiales</taxon>
        <taxon>Beijerinckiaceae</taxon>
        <taxon>Beijerinckia</taxon>
    </lineage>
</organism>
<dbReference type="EMBL" id="CP001016">
    <property type="protein sequence ID" value="ACB94991.1"/>
    <property type="molecule type" value="Genomic_DNA"/>
</dbReference>
<dbReference type="RefSeq" id="WP_012384348.1">
    <property type="nucleotide sequence ID" value="NC_010581.1"/>
</dbReference>
<dbReference type="SMR" id="B2IK59"/>
<dbReference type="STRING" id="395963.Bind_1351"/>
<dbReference type="KEGG" id="bid:Bind_1351"/>
<dbReference type="eggNOG" id="COG0480">
    <property type="taxonomic scope" value="Bacteria"/>
</dbReference>
<dbReference type="HOGENOM" id="CLU_002794_4_1_5"/>
<dbReference type="OrthoDB" id="9802948at2"/>
<dbReference type="Proteomes" id="UP000001695">
    <property type="component" value="Chromosome"/>
</dbReference>
<dbReference type="GO" id="GO:0005737">
    <property type="term" value="C:cytoplasm"/>
    <property type="evidence" value="ECO:0007669"/>
    <property type="project" value="UniProtKB-SubCell"/>
</dbReference>
<dbReference type="GO" id="GO:0005525">
    <property type="term" value="F:GTP binding"/>
    <property type="evidence" value="ECO:0007669"/>
    <property type="project" value="UniProtKB-UniRule"/>
</dbReference>
<dbReference type="GO" id="GO:0003924">
    <property type="term" value="F:GTPase activity"/>
    <property type="evidence" value="ECO:0007669"/>
    <property type="project" value="InterPro"/>
</dbReference>
<dbReference type="GO" id="GO:0003746">
    <property type="term" value="F:translation elongation factor activity"/>
    <property type="evidence" value="ECO:0007669"/>
    <property type="project" value="UniProtKB-UniRule"/>
</dbReference>
<dbReference type="GO" id="GO:0032790">
    <property type="term" value="P:ribosome disassembly"/>
    <property type="evidence" value="ECO:0007669"/>
    <property type="project" value="TreeGrafter"/>
</dbReference>
<dbReference type="CDD" id="cd01886">
    <property type="entry name" value="EF-G"/>
    <property type="match status" value="1"/>
</dbReference>
<dbReference type="CDD" id="cd16262">
    <property type="entry name" value="EFG_III"/>
    <property type="match status" value="1"/>
</dbReference>
<dbReference type="CDD" id="cd01434">
    <property type="entry name" value="EFG_mtEFG1_IV"/>
    <property type="match status" value="1"/>
</dbReference>
<dbReference type="CDD" id="cd03713">
    <property type="entry name" value="EFG_mtEFG_C"/>
    <property type="match status" value="1"/>
</dbReference>
<dbReference type="CDD" id="cd04088">
    <property type="entry name" value="EFG_mtEFG_II"/>
    <property type="match status" value="1"/>
</dbReference>
<dbReference type="FunFam" id="2.40.30.10:FF:000006">
    <property type="entry name" value="Elongation factor G"/>
    <property type="match status" value="1"/>
</dbReference>
<dbReference type="FunFam" id="3.30.230.10:FF:000003">
    <property type="entry name" value="Elongation factor G"/>
    <property type="match status" value="1"/>
</dbReference>
<dbReference type="FunFam" id="3.30.70.240:FF:000001">
    <property type="entry name" value="Elongation factor G"/>
    <property type="match status" value="1"/>
</dbReference>
<dbReference type="FunFam" id="3.30.70.870:FF:000001">
    <property type="entry name" value="Elongation factor G"/>
    <property type="match status" value="1"/>
</dbReference>
<dbReference type="FunFam" id="3.40.50.300:FF:000029">
    <property type="entry name" value="Elongation factor G"/>
    <property type="match status" value="1"/>
</dbReference>
<dbReference type="Gene3D" id="3.30.230.10">
    <property type="match status" value="1"/>
</dbReference>
<dbReference type="Gene3D" id="3.30.70.240">
    <property type="match status" value="1"/>
</dbReference>
<dbReference type="Gene3D" id="3.30.70.870">
    <property type="entry name" value="Elongation Factor G (Translational Gtpase), domain 3"/>
    <property type="match status" value="1"/>
</dbReference>
<dbReference type="Gene3D" id="3.40.50.300">
    <property type="entry name" value="P-loop containing nucleotide triphosphate hydrolases"/>
    <property type="match status" value="1"/>
</dbReference>
<dbReference type="Gene3D" id="2.40.30.10">
    <property type="entry name" value="Translation factors"/>
    <property type="match status" value="1"/>
</dbReference>
<dbReference type="HAMAP" id="MF_00054_B">
    <property type="entry name" value="EF_G_EF_2_B"/>
    <property type="match status" value="1"/>
</dbReference>
<dbReference type="InterPro" id="IPR053905">
    <property type="entry name" value="EF-G-like_DII"/>
</dbReference>
<dbReference type="InterPro" id="IPR041095">
    <property type="entry name" value="EFG_II"/>
</dbReference>
<dbReference type="InterPro" id="IPR009022">
    <property type="entry name" value="EFG_III"/>
</dbReference>
<dbReference type="InterPro" id="IPR035647">
    <property type="entry name" value="EFG_III/V"/>
</dbReference>
<dbReference type="InterPro" id="IPR047872">
    <property type="entry name" value="EFG_IV"/>
</dbReference>
<dbReference type="InterPro" id="IPR035649">
    <property type="entry name" value="EFG_V"/>
</dbReference>
<dbReference type="InterPro" id="IPR000640">
    <property type="entry name" value="EFG_V-like"/>
</dbReference>
<dbReference type="InterPro" id="IPR031157">
    <property type="entry name" value="G_TR_CS"/>
</dbReference>
<dbReference type="InterPro" id="IPR027417">
    <property type="entry name" value="P-loop_NTPase"/>
</dbReference>
<dbReference type="InterPro" id="IPR020568">
    <property type="entry name" value="Ribosomal_Su5_D2-typ_SF"/>
</dbReference>
<dbReference type="InterPro" id="IPR014721">
    <property type="entry name" value="Ribsml_uS5_D2-typ_fold_subgr"/>
</dbReference>
<dbReference type="InterPro" id="IPR005225">
    <property type="entry name" value="Small_GTP-bd"/>
</dbReference>
<dbReference type="InterPro" id="IPR000795">
    <property type="entry name" value="T_Tr_GTP-bd_dom"/>
</dbReference>
<dbReference type="InterPro" id="IPR009000">
    <property type="entry name" value="Transl_B-barrel_sf"/>
</dbReference>
<dbReference type="InterPro" id="IPR004540">
    <property type="entry name" value="Transl_elong_EFG/EF2"/>
</dbReference>
<dbReference type="InterPro" id="IPR005517">
    <property type="entry name" value="Transl_elong_EFG/EF2_IV"/>
</dbReference>
<dbReference type="NCBIfam" id="TIGR00484">
    <property type="entry name" value="EF-G"/>
    <property type="match status" value="1"/>
</dbReference>
<dbReference type="NCBIfam" id="NF009381">
    <property type="entry name" value="PRK12740.1-5"/>
    <property type="match status" value="1"/>
</dbReference>
<dbReference type="NCBIfam" id="TIGR00231">
    <property type="entry name" value="small_GTP"/>
    <property type="match status" value="1"/>
</dbReference>
<dbReference type="PANTHER" id="PTHR43261:SF1">
    <property type="entry name" value="RIBOSOME-RELEASING FACTOR 2, MITOCHONDRIAL"/>
    <property type="match status" value="1"/>
</dbReference>
<dbReference type="PANTHER" id="PTHR43261">
    <property type="entry name" value="TRANSLATION ELONGATION FACTOR G-RELATED"/>
    <property type="match status" value="1"/>
</dbReference>
<dbReference type="Pfam" id="PF22042">
    <property type="entry name" value="EF-G_D2"/>
    <property type="match status" value="1"/>
</dbReference>
<dbReference type="Pfam" id="PF00679">
    <property type="entry name" value="EFG_C"/>
    <property type="match status" value="1"/>
</dbReference>
<dbReference type="Pfam" id="PF14492">
    <property type="entry name" value="EFG_III"/>
    <property type="match status" value="1"/>
</dbReference>
<dbReference type="Pfam" id="PF03764">
    <property type="entry name" value="EFG_IV"/>
    <property type="match status" value="1"/>
</dbReference>
<dbReference type="Pfam" id="PF00009">
    <property type="entry name" value="GTP_EFTU"/>
    <property type="match status" value="1"/>
</dbReference>
<dbReference type="PRINTS" id="PR00315">
    <property type="entry name" value="ELONGATNFCT"/>
</dbReference>
<dbReference type="SMART" id="SM00838">
    <property type="entry name" value="EFG_C"/>
    <property type="match status" value="1"/>
</dbReference>
<dbReference type="SMART" id="SM00889">
    <property type="entry name" value="EFG_IV"/>
    <property type="match status" value="1"/>
</dbReference>
<dbReference type="SUPFAM" id="SSF54980">
    <property type="entry name" value="EF-G C-terminal domain-like"/>
    <property type="match status" value="2"/>
</dbReference>
<dbReference type="SUPFAM" id="SSF52540">
    <property type="entry name" value="P-loop containing nucleoside triphosphate hydrolases"/>
    <property type="match status" value="1"/>
</dbReference>
<dbReference type="SUPFAM" id="SSF54211">
    <property type="entry name" value="Ribosomal protein S5 domain 2-like"/>
    <property type="match status" value="1"/>
</dbReference>
<dbReference type="SUPFAM" id="SSF50447">
    <property type="entry name" value="Translation proteins"/>
    <property type="match status" value="1"/>
</dbReference>
<dbReference type="PROSITE" id="PS00301">
    <property type="entry name" value="G_TR_1"/>
    <property type="match status" value="1"/>
</dbReference>
<dbReference type="PROSITE" id="PS51722">
    <property type="entry name" value="G_TR_2"/>
    <property type="match status" value="1"/>
</dbReference>
<keyword id="KW-0963">Cytoplasm</keyword>
<keyword id="KW-0251">Elongation factor</keyword>
<keyword id="KW-0342">GTP-binding</keyword>
<keyword id="KW-0547">Nucleotide-binding</keyword>
<keyword id="KW-0648">Protein biosynthesis</keyword>
<keyword id="KW-1185">Reference proteome</keyword>